<comment type="function">
    <text evidence="1">This protein is located at the 30S-50S ribosomal subunit interface and may play a role in the structure and function of the aminoacyl-tRNA binding site.</text>
</comment>
<comment type="similarity">
    <text evidence="1">Belongs to the bacterial ribosomal protein bL19 family.</text>
</comment>
<accession>Q0T174</accession>
<gene>
    <name evidence="1" type="primary">rplS</name>
    <name type="ordered locus">SFV_2864</name>
</gene>
<proteinExistence type="inferred from homology"/>
<dbReference type="EMBL" id="CP000266">
    <property type="protein sequence ID" value="ABF04941.1"/>
    <property type="molecule type" value="Genomic_DNA"/>
</dbReference>
<dbReference type="RefSeq" id="WP_000065253.1">
    <property type="nucleotide sequence ID" value="NC_008258.1"/>
</dbReference>
<dbReference type="SMR" id="Q0T174"/>
<dbReference type="GeneID" id="93774456"/>
<dbReference type="KEGG" id="sfv:SFV_2864"/>
<dbReference type="HOGENOM" id="CLU_103507_2_1_6"/>
<dbReference type="Proteomes" id="UP000000659">
    <property type="component" value="Chromosome"/>
</dbReference>
<dbReference type="GO" id="GO:0022625">
    <property type="term" value="C:cytosolic large ribosomal subunit"/>
    <property type="evidence" value="ECO:0007669"/>
    <property type="project" value="TreeGrafter"/>
</dbReference>
<dbReference type="GO" id="GO:0003735">
    <property type="term" value="F:structural constituent of ribosome"/>
    <property type="evidence" value="ECO:0007669"/>
    <property type="project" value="InterPro"/>
</dbReference>
<dbReference type="GO" id="GO:0006412">
    <property type="term" value="P:translation"/>
    <property type="evidence" value="ECO:0007669"/>
    <property type="project" value="UniProtKB-UniRule"/>
</dbReference>
<dbReference type="FunFam" id="2.30.30.790:FF:000001">
    <property type="entry name" value="50S ribosomal protein L19"/>
    <property type="match status" value="1"/>
</dbReference>
<dbReference type="Gene3D" id="2.30.30.790">
    <property type="match status" value="1"/>
</dbReference>
<dbReference type="HAMAP" id="MF_00402">
    <property type="entry name" value="Ribosomal_bL19"/>
    <property type="match status" value="1"/>
</dbReference>
<dbReference type="InterPro" id="IPR001857">
    <property type="entry name" value="Ribosomal_bL19"/>
</dbReference>
<dbReference type="InterPro" id="IPR018257">
    <property type="entry name" value="Ribosomal_bL19_CS"/>
</dbReference>
<dbReference type="InterPro" id="IPR038657">
    <property type="entry name" value="Ribosomal_bL19_sf"/>
</dbReference>
<dbReference type="InterPro" id="IPR008991">
    <property type="entry name" value="Translation_prot_SH3-like_sf"/>
</dbReference>
<dbReference type="NCBIfam" id="TIGR01024">
    <property type="entry name" value="rplS_bact"/>
    <property type="match status" value="1"/>
</dbReference>
<dbReference type="PANTHER" id="PTHR15680:SF9">
    <property type="entry name" value="LARGE RIBOSOMAL SUBUNIT PROTEIN BL19M"/>
    <property type="match status" value="1"/>
</dbReference>
<dbReference type="PANTHER" id="PTHR15680">
    <property type="entry name" value="RIBOSOMAL PROTEIN L19"/>
    <property type="match status" value="1"/>
</dbReference>
<dbReference type="Pfam" id="PF01245">
    <property type="entry name" value="Ribosomal_L19"/>
    <property type="match status" value="1"/>
</dbReference>
<dbReference type="PIRSF" id="PIRSF002191">
    <property type="entry name" value="Ribosomal_L19"/>
    <property type="match status" value="1"/>
</dbReference>
<dbReference type="PRINTS" id="PR00061">
    <property type="entry name" value="RIBOSOMALL19"/>
</dbReference>
<dbReference type="SUPFAM" id="SSF50104">
    <property type="entry name" value="Translation proteins SH3-like domain"/>
    <property type="match status" value="1"/>
</dbReference>
<dbReference type="PROSITE" id="PS01015">
    <property type="entry name" value="RIBOSOMAL_L19"/>
    <property type="match status" value="1"/>
</dbReference>
<protein>
    <recommendedName>
        <fullName evidence="1">Large ribosomal subunit protein bL19</fullName>
    </recommendedName>
    <alternativeName>
        <fullName evidence="2">50S ribosomal protein L19</fullName>
    </alternativeName>
</protein>
<reference key="1">
    <citation type="journal article" date="2006" name="BMC Genomics">
        <title>Complete genome sequence of Shigella flexneri 5b and comparison with Shigella flexneri 2a.</title>
        <authorList>
            <person name="Nie H."/>
            <person name="Yang F."/>
            <person name="Zhang X."/>
            <person name="Yang J."/>
            <person name="Chen L."/>
            <person name="Wang J."/>
            <person name="Xiong Z."/>
            <person name="Peng J."/>
            <person name="Sun L."/>
            <person name="Dong J."/>
            <person name="Xue Y."/>
            <person name="Xu X."/>
            <person name="Chen S."/>
            <person name="Yao Z."/>
            <person name="Shen Y."/>
            <person name="Jin Q."/>
        </authorList>
    </citation>
    <scope>NUCLEOTIDE SEQUENCE [LARGE SCALE GENOMIC DNA]</scope>
    <source>
        <strain>8401</strain>
    </source>
</reference>
<name>RL19_SHIF8</name>
<organism>
    <name type="scientific">Shigella flexneri serotype 5b (strain 8401)</name>
    <dbReference type="NCBI Taxonomy" id="373384"/>
    <lineage>
        <taxon>Bacteria</taxon>
        <taxon>Pseudomonadati</taxon>
        <taxon>Pseudomonadota</taxon>
        <taxon>Gammaproteobacteria</taxon>
        <taxon>Enterobacterales</taxon>
        <taxon>Enterobacteriaceae</taxon>
        <taxon>Shigella</taxon>
    </lineage>
</organism>
<evidence type="ECO:0000255" key="1">
    <source>
        <dbReference type="HAMAP-Rule" id="MF_00402"/>
    </source>
</evidence>
<evidence type="ECO:0000305" key="2"/>
<sequence length="115" mass="13133">MSNIIKQLEQEQMKQDVPSFRPGDTVEVKVWVVEGSKKRLQAFEGVVIAIRNRGLHSAFTVRKISNGEGVERVFQTHSPVVDSISVKRRGAVRKAKLYYLRERTGKAARIKERLN</sequence>
<feature type="chain" id="PRO_1000049748" description="Large ribosomal subunit protein bL19">
    <location>
        <begin position="1"/>
        <end position="115"/>
    </location>
</feature>
<keyword id="KW-0687">Ribonucleoprotein</keyword>
<keyword id="KW-0689">Ribosomal protein</keyword>